<protein>
    <recommendedName>
        <fullName>ABC transporter G family member 4</fullName>
        <shortName>ABC transporter ABCG.4</shortName>
        <shortName>AtABCG4</shortName>
    </recommendedName>
    <alternativeName>
        <fullName>White-brown complex homolog protein 4</fullName>
        <shortName>AtWBC4</shortName>
    </alternativeName>
</protein>
<name>AB4G_ARATH</name>
<keyword id="KW-0067">ATP-binding</keyword>
<keyword id="KW-0472">Membrane</keyword>
<keyword id="KW-0547">Nucleotide-binding</keyword>
<keyword id="KW-1185">Reference proteome</keyword>
<keyword id="KW-0812">Transmembrane</keyword>
<keyword id="KW-1133">Transmembrane helix</keyword>
<keyword id="KW-0813">Transport</keyword>
<gene>
    <name type="primary">ABCG4</name>
    <name type="synonym">WBC4</name>
    <name type="ordered locus">At4g25750</name>
    <name type="ORF">F14M19.30</name>
</gene>
<evidence type="ECO:0000250" key="1"/>
<evidence type="ECO:0000255" key="2"/>
<evidence type="ECO:0000255" key="3">
    <source>
        <dbReference type="PROSITE-ProRule" id="PRU00434"/>
    </source>
</evidence>
<evidence type="ECO:0000305" key="4"/>
<accession>Q9SW08</accession>
<dbReference type="EMBL" id="AL049480">
    <property type="protein sequence ID" value="CAB39596.1"/>
    <property type="molecule type" value="Genomic_DNA"/>
</dbReference>
<dbReference type="EMBL" id="AL161563">
    <property type="protein sequence ID" value="CAB81385.1"/>
    <property type="molecule type" value="Genomic_DNA"/>
</dbReference>
<dbReference type="EMBL" id="CP002687">
    <property type="protein sequence ID" value="AEE85109.1"/>
    <property type="molecule type" value="Genomic_DNA"/>
</dbReference>
<dbReference type="PIR" id="T04229">
    <property type="entry name" value="T04229"/>
</dbReference>
<dbReference type="RefSeq" id="NP_194305.1">
    <property type="nucleotide sequence ID" value="NM_118707.2"/>
</dbReference>
<dbReference type="SMR" id="Q9SW08"/>
<dbReference type="FunCoup" id="Q9SW08">
    <property type="interactions" value="66"/>
</dbReference>
<dbReference type="STRING" id="3702.Q9SW08"/>
<dbReference type="PaxDb" id="3702-AT4G25750.1"/>
<dbReference type="ProteomicsDB" id="243275"/>
<dbReference type="EnsemblPlants" id="AT4G25750.1">
    <property type="protein sequence ID" value="AT4G25750.1"/>
    <property type="gene ID" value="AT4G25750"/>
</dbReference>
<dbReference type="GeneID" id="828680"/>
<dbReference type="Gramene" id="AT4G25750.1">
    <property type="protein sequence ID" value="AT4G25750.1"/>
    <property type="gene ID" value="AT4G25750"/>
</dbReference>
<dbReference type="KEGG" id="ath:AT4G25750"/>
<dbReference type="Araport" id="AT4G25750"/>
<dbReference type="TAIR" id="AT4G25750">
    <property type="gene designation" value="ABCG4"/>
</dbReference>
<dbReference type="eggNOG" id="KOG0061">
    <property type="taxonomic scope" value="Eukaryota"/>
</dbReference>
<dbReference type="HOGENOM" id="CLU_000604_57_8_1"/>
<dbReference type="InParanoid" id="Q9SW08"/>
<dbReference type="OMA" id="RVRPWWD"/>
<dbReference type="PhylomeDB" id="Q9SW08"/>
<dbReference type="PRO" id="PR:Q9SW08"/>
<dbReference type="Proteomes" id="UP000006548">
    <property type="component" value="Chromosome 4"/>
</dbReference>
<dbReference type="ExpressionAtlas" id="Q9SW08">
    <property type="expression patterns" value="baseline and differential"/>
</dbReference>
<dbReference type="GO" id="GO:0016020">
    <property type="term" value="C:membrane"/>
    <property type="evidence" value="ECO:0007669"/>
    <property type="project" value="UniProtKB-SubCell"/>
</dbReference>
<dbReference type="GO" id="GO:0140359">
    <property type="term" value="F:ABC-type transporter activity"/>
    <property type="evidence" value="ECO:0007669"/>
    <property type="project" value="InterPro"/>
</dbReference>
<dbReference type="GO" id="GO:0005524">
    <property type="term" value="F:ATP binding"/>
    <property type="evidence" value="ECO:0007669"/>
    <property type="project" value="UniProtKB-KW"/>
</dbReference>
<dbReference type="GO" id="GO:0016887">
    <property type="term" value="F:ATP hydrolysis activity"/>
    <property type="evidence" value="ECO:0007669"/>
    <property type="project" value="InterPro"/>
</dbReference>
<dbReference type="FunFam" id="3.40.50.300:FF:002383">
    <property type="entry name" value="ABC transporter G family member 8"/>
    <property type="match status" value="1"/>
</dbReference>
<dbReference type="Gene3D" id="3.40.50.300">
    <property type="entry name" value="P-loop containing nucleotide triphosphate hydrolases"/>
    <property type="match status" value="1"/>
</dbReference>
<dbReference type="InterPro" id="IPR003593">
    <property type="entry name" value="AAA+_ATPase"/>
</dbReference>
<dbReference type="InterPro" id="IPR013525">
    <property type="entry name" value="ABC2_TM"/>
</dbReference>
<dbReference type="InterPro" id="IPR003439">
    <property type="entry name" value="ABC_transporter-like_ATP-bd"/>
</dbReference>
<dbReference type="InterPro" id="IPR017871">
    <property type="entry name" value="ABC_transporter-like_CS"/>
</dbReference>
<dbReference type="InterPro" id="IPR043926">
    <property type="entry name" value="ABCG_dom"/>
</dbReference>
<dbReference type="InterPro" id="IPR050352">
    <property type="entry name" value="ABCG_transporters"/>
</dbReference>
<dbReference type="InterPro" id="IPR027417">
    <property type="entry name" value="P-loop_NTPase"/>
</dbReference>
<dbReference type="PANTHER" id="PTHR48041">
    <property type="entry name" value="ABC TRANSPORTER G FAMILY MEMBER 28"/>
    <property type="match status" value="1"/>
</dbReference>
<dbReference type="PANTHER" id="PTHR48041:SF9">
    <property type="entry name" value="ABC TRANSPORTER G FAMILY MEMBER 4"/>
    <property type="match status" value="1"/>
</dbReference>
<dbReference type="Pfam" id="PF01061">
    <property type="entry name" value="ABC2_membrane"/>
    <property type="match status" value="1"/>
</dbReference>
<dbReference type="Pfam" id="PF19055">
    <property type="entry name" value="ABC2_membrane_7"/>
    <property type="match status" value="1"/>
</dbReference>
<dbReference type="Pfam" id="PF00005">
    <property type="entry name" value="ABC_tran"/>
    <property type="match status" value="1"/>
</dbReference>
<dbReference type="SMART" id="SM00382">
    <property type="entry name" value="AAA"/>
    <property type="match status" value="1"/>
</dbReference>
<dbReference type="SUPFAM" id="SSF52540">
    <property type="entry name" value="P-loop containing nucleoside triphosphate hydrolases"/>
    <property type="match status" value="1"/>
</dbReference>
<dbReference type="PROSITE" id="PS00211">
    <property type="entry name" value="ABC_TRANSPORTER_1"/>
    <property type="match status" value="1"/>
</dbReference>
<dbReference type="PROSITE" id="PS50893">
    <property type="entry name" value="ABC_TRANSPORTER_2"/>
    <property type="match status" value="1"/>
</dbReference>
<sequence length="577" mass="64690">MESYTLSTSSISYAKPLSPLLLTAEQPSFILRNITLTSHPSQILAIIGPSGAGKSTLLDILAARTSPTSGSILLNSVLINPSSYRKISSYVPQHDTFFPLLTVSETFTFSASLLLPKNLSKVSSVVASLLKELNLTHLAHTRLGQGLSGGERRRVSIGLSLLHDPEVLLLDEPTSGLDSKSAFDVVQILKSIATSRERIVILSIHQPSFKILSLIDRVLLLSKGTIVYHGRLDLLEAFLLSKGFTVPSQLNSLEYAMEILQNIRDPYENANIALPDHCPESKKQNQKQSIVRYKSSRITEISLLSSRFWKIIYRTRQLLLTNILESLVVGLVLGTIYLNIGTGKEGIRKRFGLFAFTLTFLLSSTTQTLPIFIDERPILLRETSSGLYRLSSHILANTLVFLPYLLLIAIIYSVSLYFLVGLCFSWQALAYFVLVIWIIVLMANSFVLFLSSLAPNYIAGTSSVTILLAAFFLFSGYFISKESLPKYWLFMYFFSMYKYALDALLINEYSCLHNKCLVWFEEASVNSCLVTGGDVLDKNGLHERQRWFNVYMLLGFFVLYRVLCFLVLLKRVSGSKR</sequence>
<proteinExistence type="inferred from homology"/>
<reference key="1">
    <citation type="journal article" date="1999" name="Nature">
        <title>Sequence and analysis of chromosome 4 of the plant Arabidopsis thaliana.</title>
        <authorList>
            <person name="Mayer K.F.X."/>
            <person name="Schueller C."/>
            <person name="Wambutt R."/>
            <person name="Murphy G."/>
            <person name="Volckaert G."/>
            <person name="Pohl T."/>
            <person name="Duesterhoeft A."/>
            <person name="Stiekema W."/>
            <person name="Entian K.-D."/>
            <person name="Terryn N."/>
            <person name="Harris B."/>
            <person name="Ansorge W."/>
            <person name="Brandt P."/>
            <person name="Grivell L.A."/>
            <person name="Rieger M."/>
            <person name="Weichselgartner M."/>
            <person name="de Simone V."/>
            <person name="Obermaier B."/>
            <person name="Mache R."/>
            <person name="Mueller M."/>
            <person name="Kreis M."/>
            <person name="Delseny M."/>
            <person name="Puigdomenech P."/>
            <person name="Watson M."/>
            <person name="Schmidtheini T."/>
            <person name="Reichert B."/>
            <person name="Portetelle D."/>
            <person name="Perez-Alonso M."/>
            <person name="Boutry M."/>
            <person name="Bancroft I."/>
            <person name="Vos P."/>
            <person name="Hoheisel J."/>
            <person name="Zimmermann W."/>
            <person name="Wedler H."/>
            <person name="Ridley P."/>
            <person name="Langham S.-A."/>
            <person name="McCullagh B."/>
            <person name="Bilham L."/>
            <person name="Robben J."/>
            <person name="van der Schueren J."/>
            <person name="Grymonprez B."/>
            <person name="Chuang Y.-J."/>
            <person name="Vandenbussche F."/>
            <person name="Braeken M."/>
            <person name="Weltjens I."/>
            <person name="Voet M."/>
            <person name="Bastiaens I."/>
            <person name="Aert R."/>
            <person name="Defoor E."/>
            <person name="Weitzenegger T."/>
            <person name="Bothe G."/>
            <person name="Ramsperger U."/>
            <person name="Hilbert H."/>
            <person name="Braun M."/>
            <person name="Holzer E."/>
            <person name="Brandt A."/>
            <person name="Peters S."/>
            <person name="van Staveren M."/>
            <person name="Dirkse W."/>
            <person name="Mooijman P."/>
            <person name="Klein Lankhorst R."/>
            <person name="Rose M."/>
            <person name="Hauf J."/>
            <person name="Koetter P."/>
            <person name="Berneiser S."/>
            <person name="Hempel S."/>
            <person name="Feldpausch M."/>
            <person name="Lamberth S."/>
            <person name="Van den Daele H."/>
            <person name="De Keyser A."/>
            <person name="Buysshaert C."/>
            <person name="Gielen J."/>
            <person name="Villarroel R."/>
            <person name="De Clercq R."/>
            <person name="van Montagu M."/>
            <person name="Rogers J."/>
            <person name="Cronin A."/>
            <person name="Quail M.A."/>
            <person name="Bray-Allen S."/>
            <person name="Clark L."/>
            <person name="Doggett J."/>
            <person name="Hall S."/>
            <person name="Kay M."/>
            <person name="Lennard N."/>
            <person name="McLay K."/>
            <person name="Mayes R."/>
            <person name="Pettett A."/>
            <person name="Rajandream M.A."/>
            <person name="Lyne M."/>
            <person name="Benes V."/>
            <person name="Rechmann S."/>
            <person name="Borkova D."/>
            <person name="Bloecker H."/>
            <person name="Scharfe M."/>
            <person name="Grimm M."/>
            <person name="Loehnert T.-H."/>
            <person name="Dose S."/>
            <person name="de Haan M."/>
            <person name="Maarse A.C."/>
            <person name="Schaefer M."/>
            <person name="Mueller-Auer S."/>
            <person name="Gabel C."/>
            <person name="Fuchs M."/>
            <person name="Fartmann B."/>
            <person name="Granderath K."/>
            <person name="Dauner D."/>
            <person name="Herzl A."/>
            <person name="Neumann S."/>
            <person name="Argiriou A."/>
            <person name="Vitale D."/>
            <person name="Liguori R."/>
            <person name="Piravandi E."/>
            <person name="Massenet O."/>
            <person name="Quigley F."/>
            <person name="Clabauld G."/>
            <person name="Muendlein A."/>
            <person name="Felber R."/>
            <person name="Schnabl S."/>
            <person name="Hiller R."/>
            <person name="Schmidt W."/>
            <person name="Lecharny A."/>
            <person name="Aubourg S."/>
            <person name="Chefdor F."/>
            <person name="Cooke R."/>
            <person name="Berger C."/>
            <person name="Monfort A."/>
            <person name="Casacuberta E."/>
            <person name="Gibbons T."/>
            <person name="Weber N."/>
            <person name="Vandenbol M."/>
            <person name="Bargues M."/>
            <person name="Terol J."/>
            <person name="Torres A."/>
            <person name="Perez-Perez A."/>
            <person name="Purnelle B."/>
            <person name="Bent E."/>
            <person name="Johnson S."/>
            <person name="Tacon D."/>
            <person name="Jesse T."/>
            <person name="Heijnen L."/>
            <person name="Schwarz S."/>
            <person name="Scholler P."/>
            <person name="Heber S."/>
            <person name="Francs P."/>
            <person name="Bielke C."/>
            <person name="Frishman D."/>
            <person name="Haase D."/>
            <person name="Lemcke K."/>
            <person name="Mewes H.-W."/>
            <person name="Stocker S."/>
            <person name="Zaccaria P."/>
            <person name="Bevan M."/>
            <person name="Wilson R.K."/>
            <person name="de la Bastide M."/>
            <person name="Habermann K."/>
            <person name="Parnell L."/>
            <person name="Dedhia N."/>
            <person name="Gnoj L."/>
            <person name="Schutz K."/>
            <person name="Huang E."/>
            <person name="Spiegel L."/>
            <person name="Sekhon M."/>
            <person name="Murray J."/>
            <person name="Sheet P."/>
            <person name="Cordes M."/>
            <person name="Abu-Threideh J."/>
            <person name="Stoneking T."/>
            <person name="Kalicki J."/>
            <person name="Graves T."/>
            <person name="Harmon G."/>
            <person name="Edwards J."/>
            <person name="Latreille P."/>
            <person name="Courtney L."/>
            <person name="Cloud J."/>
            <person name="Abbott A."/>
            <person name="Scott K."/>
            <person name="Johnson D."/>
            <person name="Minx P."/>
            <person name="Bentley D."/>
            <person name="Fulton B."/>
            <person name="Miller N."/>
            <person name="Greco T."/>
            <person name="Kemp K."/>
            <person name="Kramer J."/>
            <person name="Fulton L."/>
            <person name="Mardis E."/>
            <person name="Dante M."/>
            <person name="Pepin K."/>
            <person name="Hillier L.W."/>
            <person name="Nelson J."/>
            <person name="Spieth J."/>
            <person name="Ryan E."/>
            <person name="Andrews S."/>
            <person name="Geisel C."/>
            <person name="Layman D."/>
            <person name="Du H."/>
            <person name="Ali J."/>
            <person name="Berghoff A."/>
            <person name="Jones K."/>
            <person name="Drone K."/>
            <person name="Cotton M."/>
            <person name="Joshu C."/>
            <person name="Antonoiu B."/>
            <person name="Zidanic M."/>
            <person name="Strong C."/>
            <person name="Sun H."/>
            <person name="Lamar B."/>
            <person name="Yordan C."/>
            <person name="Ma P."/>
            <person name="Zhong J."/>
            <person name="Preston R."/>
            <person name="Vil D."/>
            <person name="Shekher M."/>
            <person name="Matero A."/>
            <person name="Shah R."/>
            <person name="Swaby I.K."/>
            <person name="O'Shaughnessy A."/>
            <person name="Rodriguez M."/>
            <person name="Hoffman J."/>
            <person name="Till S."/>
            <person name="Granat S."/>
            <person name="Shohdy N."/>
            <person name="Hasegawa A."/>
            <person name="Hameed A."/>
            <person name="Lodhi M."/>
            <person name="Johnson A."/>
            <person name="Chen E."/>
            <person name="Marra M.A."/>
            <person name="Martienssen R."/>
            <person name="McCombie W.R."/>
        </authorList>
    </citation>
    <scope>NUCLEOTIDE SEQUENCE [LARGE SCALE GENOMIC DNA]</scope>
    <source>
        <strain>cv. Columbia</strain>
    </source>
</reference>
<reference key="2">
    <citation type="journal article" date="2017" name="Plant J.">
        <title>Araport11: a complete reannotation of the Arabidopsis thaliana reference genome.</title>
        <authorList>
            <person name="Cheng C.Y."/>
            <person name="Krishnakumar V."/>
            <person name="Chan A.P."/>
            <person name="Thibaud-Nissen F."/>
            <person name="Schobel S."/>
            <person name="Town C.D."/>
        </authorList>
    </citation>
    <scope>GENOME REANNOTATION</scope>
    <source>
        <strain>cv. Columbia</strain>
    </source>
</reference>
<reference key="3">
    <citation type="journal article" date="2001" name="J. Biol. Chem.">
        <title>The Arabidopsis thaliana ABC protein superfamily, a complete inventory.</title>
        <authorList>
            <person name="Sanchez-Fernandez R."/>
            <person name="Davies T.G."/>
            <person name="Coleman J.O."/>
            <person name="Rea P.A."/>
        </authorList>
    </citation>
    <scope>GENE FAMILY</scope>
    <scope>NOMENCLATURE</scope>
</reference>
<reference key="4">
    <citation type="journal article" date="2008" name="Trends Plant Sci.">
        <title>Plant ABC proteins - a unified nomenclature and updated inventory.</title>
        <authorList>
            <person name="Verrier P.J."/>
            <person name="Bird D."/>
            <person name="Burla B."/>
            <person name="Dassa E."/>
            <person name="Forestier C."/>
            <person name="Geisler M."/>
            <person name="Klein M."/>
            <person name="Kolukisaoglu H.U."/>
            <person name="Lee Y."/>
            <person name="Martinoia E."/>
            <person name="Murphy A."/>
            <person name="Rea P.A."/>
            <person name="Samuels L."/>
            <person name="Schulz B."/>
            <person name="Spalding E.J."/>
            <person name="Yazaki K."/>
            <person name="Theodoulou F.L."/>
        </authorList>
    </citation>
    <scope>GENE FAMILY</scope>
    <scope>NOMENCLATURE</scope>
</reference>
<organism>
    <name type="scientific">Arabidopsis thaliana</name>
    <name type="common">Mouse-ear cress</name>
    <dbReference type="NCBI Taxonomy" id="3702"/>
    <lineage>
        <taxon>Eukaryota</taxon>
        <taxon>Viridiplantae</taxon>
        <taxon>Streptophyta</taxon>
        <taxon>Embryophyta</taxon>
        <taxon>Tracheophyta</taxon>
        <taxon>Spermatophyta</taxon>
        <taxon>Magnoliopsida</taxon>
        <taxon>eudicotyledons</taxon>
        <taxon>Gunneridae</taxon>
        <taxon>Pentapetalae</taxon>
        <taxon>rosids</taxon>
        <taxon>malvids</taxon>
        <taxon>Brassicales</taxon>
        <taxon>Brassicaceae</taxon>
        <taxon>Camelineae</taxon>
        <taxon>Arabidopsis</taxon>
    </lineage>
</organism>
<comment type="subcellular location">
    <subcellularLocation>
        <location evidence="1">Membrane</location>
        <topology evidence="1">Multi-pass membrane protein</topology>
    </subcellularLocation>
</comment>
<comment type="similarity">
    <text evidence="4">Belongs to the ABC transporter superfamily. ABCG family. Eye pigment precursor importer (TC 3.A.1.204) subfamily.</text>
</comment>
<feature type="chain" id="PRO_0000240676" description="ABC transporter G family member 4">
    <location>
        <begin position="1"/>
        <end position="577"/>
    </location>
</feature>
<feature type="transmembrane region" description="Helical" evidence="2">
    <location>
        <begin position="318"/>
        <end position="338"/>
    </location>
</feature>
<feature type="transmembrane region" description="Helical" evidence="2">
    <location>
        <begin position="353"/>
        <end position="373"/>
    </location>
</feature>
<feature type="transmembrane region" description="Helical" evidence="2">
    <location>
        <begin position="400"/>
        <end position="420"/>
    </location>
</feature>
<feature type="transmembrane region" description="Helical" evidence="2">
    <location>
        <begin position="429"/>
        <end position="449"/>
    </location>
</feature>
<feature type="transmembrane region" description="Helical" evidence="2">
    <location>
        <begin position="458"/>
        <end position="478"/>
    </location>
</feature>
<feature type="transmembrane region" description="Helical" evidence="2">
    <location>
        <begin position="487"/>
        <end position="507"/>
    </location>
</feature>
<feature type="transmembrane region" description="Helical" evidence="2">
    <location>
        <begin position="548"/>
        <end position="568"/>
    </location>
</feature>
<feature type="domain" description="ABC transporter" evidence="3">
    <location>
        <begin position="6"/>
        <end position="248"/>
    </location>
</feature>
<feature type="domain" description="ABC transmembrane type-2">
    <location>
        <begin position="299"/>
        <end position="509"/>
    </location>
</feature>
<feature type="binding site" evidence="3">
    <location>
        <begin position="48"/>
        <end position="55"/>
    </location>
    <ligand>
        <name>ATP</name>
        <dbReference type="ChEBI" id="CHEBI:30616"/>
    </ligand>
</feature>